<name>VGLU2_HUMAN</name>
<organism>
    <name type="scientific">Homo sapiens</name>
    <name type="common">Human</name>
    <dbReference type="NCBI Taxonomy" id="9606"/>
    <lineage>
        <taxon>Eukaryota</taxon>
        <taxon>Metazoa</taxon>
        <taxon>Chordata</taxon>
        <taxon>Craniata</taxon>
        <taxon>Vertebrata</taxon>
        <taxon>Euteleostomi</taxon>
        <taxon>Mammalia</taxon>
        <taxon>Eutheria</taxon>
        <taxon>Euarchontoglires</taxon>
        <taxon>Primates</taxon>
        <taxon>Haplorrhini</taxon>
        <taxon>Catarrhini</taxon>
        <taxon>Hominidae</taxon>
        <taxon>Homo</taxon>
    </lineage>
</organism>
<keyword id="KW-0050">Antiport</keyword>
<keyword id="KW-1003">Cell membrane</keyword>
<keyword id="KW-0868">Chloride</keyword>
<keyword id="KW-0869">Chloride channel</keyword>
<keyword id="KW-0968">Cytoplasmic vesicle</keyword>
<keyword id="KW-0325">Glycoprotein</keyword>
<keyword id="KW-0407">Ion channel</keyword>
<keyword id="KW-0406">Ion transport</keyword>
<keyword id="KW-0472">Membrane</keyword>
<keyword id="KW-0532">Neurotransmitter transport</keyword>
<keyword id="KW-0592">Phosphate transport</keyword>
<keyword id="KW-1267">Proteomics identification</keyword>
<keyword id="KW-1185">Reference proteome</keyword>
<keyword id="KW-0915">Sodium</keyword>
<keyword id="KW-0739">Sodium transport</keyword>
<keyword id="KW-0769">Symport</keyword>
<keyword id="KW-0770">Synapse</keyword>
<keyword id="KW-0771">Synaptosome</keyword>
<keyword id="KW-0812">Transmembrane</keyword>
<keyword id="KW-1133">Transmembrane helix</keyword>
<keyword id="KW-0813">Transport</keyword>
<feature type="chain" id="PRO_0000318169" description="Vesicular glutamate transporter 2">
    <location>
        <begin position="1"/>
        <end position="582"/>
    </location>
</feature>
<feature type="topological domain" description="Cytoplasmic" evidence="3">
    <location>
        <begin position="1"/>
        <end position="71"/>
    </location>
</feature>
<feature type="transmembrane region" description="Helical" evidence="3">
    <location>
        <begin position="72"/>
        <end position="92"/>
    </location>
</feature>
<feature type="topological domain" description="Vesicular" evidence="3">
    <location>
        <begin position="93"/>
        <end position="125"/>
    </location>
</feature>
<feature type="transmembrane region" description="Helical" evidence="3">
    <location>
        <begin position="126"/>
        <end position="146"/>
    </location>
</feature>
<feature type="topological domain" description="Cytoplasmic" evidence="3">
    <location>
        <begin position="147"/>
        <end position="148"/>
    </location>
</feature>
<feature type="transmembrane region" description="Helical" evidence="3">
    <location>
        <begin position="149"/>
        <end position="169"/>
    </location>
</feature>
<feature type="topological domain" description="Vesicular" evidence="3">
    <location>
        <begin position="170"/>
        <end position="177"/>
    </location>
</feature>
<feature type="transmembrane region" description="Helical" evidence="3">
    <location>
        <begin position="178"/>
        <end position="198"/>
    </location>
</feature>
<feature type="topological domain" description="Cytoplasmic" evidence="3">
    <location>
        <begin position="199"/>
        <end position="216"/>
    </location>
</feature>
<feature type="transmembrane region" description="Helical" evidence="3">
    <location>
        <begin position="217"/>
        <end position="237"/>
    </location>
</feature>
<feature type="topological domain" description="Vesicular" evidence="3">
    <location>
        <begin position="238"/>
        <end position="244"/>
    </location>
</feature>
<feature type="transmembrane region" description="Helical" evidence="3">
    <location>
        <begin position="245"/>
        <end position="265"/>
    </location>
</feature>
<feature type="topological domain" description="Cytoplasmic" evidence="3">
    <location>
        <begin position="266"/>
        <end position="310"/>
    </location>
</feature>
<feature type="transmembrane region" description="Helical" evidence="3">
    <location>
        <begin position="311"/>
        <end position="331"/>
    </location>
</feature>
<feature type="topological domain" description="Vesicular" evidence="3">
    <location>
        <begin position="332"/>
        <end position="349"/>
    </location>
</feature>
<feature type="transmembrane region" description="Helical" evidence="3">
    <location>
        <begin position="350"/>
        <end position="370"/>
    </location>
</feature>
<feature type="topological domain" description="Cytoplasmic" evidence="3">
    <location>
        <begin position="371"/>
        <end position="386"/>
    </location>
</feature>
<feature type="transmembrane region" description="Helical" evidence="3">
    <location>
        <begin position="387"/>
        <end position="407"/>
    </location>
</feature>
<feature type="topological domain" description="Vesicular" evidence="3">
    <location>
        <begin position="408"/>
        <end position="409"/>
    </location>
</feature>
<feature type="transmembrane region" description="Helical" evidence="3">
    <location>
        <begin position="410"/>
        <end position="430"/>
    </location>
</feature>
<feature type="topological domain" description="Cytoplasmic" evidence="3">
    <location>
        <begin position="431"/>
        <end position="443"/>
    </location>
</feature>
<feature type="transmembrane region" description="Helical" evidence="3">
    <location>
        <begin position="444"/>
        <end position="464"/>
    </location>
</feature>
<feature type="topological domain" description="Vesicular" evidence="3">
    <location>
        <begin position="465"/>
        <end position="477"/>
    </location>
</feature>
<feature type="transmembrane region" description="Helical" evidence="3">
    <location>
        <begin position="478"/>
        <end position="498"/>
    </location>
</feature>
<feature type="topological domain" description="Cytoplasmic" evidence="3">
    <location>
        <begin position="499"/>
        <end position="582"/>
    </location>
</feature>
<feature type="glycosylation site" description="N-linked (GlcNAc...) asparagine" evidence="3">
    <location>
        <position position="100"/>
    </location>
</feature>
<feature type="glycosylation site" description="N-linked (GlcNAc...) asparagine" evidence="3">
    <location>
        <position position="101"/>
    </location>
</feature>
<feature type="glycosylation site" description="N-linked (GlcNAc...) asparagine" evidence="3">
    <location>
        <position position="470"/>
    </location>
</feature>
<feature type="sequence variant" id="VAR_038710" description="In a breast cancer sample; somatic mutation." evidence="6">
    <original>T</original>
    <variation>S</variation>
    <location>
        <position position="40"/>
    </location>
</feature>
<feature type="sequence variant" id="VAR_038711" description="In dbSNP:rs7117340.">
    <original>N</original>
    <variation>S</variation>
    <location>
        <position position="551"/>
    </location>
</feature>
<reference key="1">
    <citation type="journal article" date="2000" name="J. Neurochem.">
        <title>Molecular cloning of a novel brain-type Na(+)-dependent inorganic phosphate cotransporter.</title>
        <authorList>
            <person name="Aihara Y."/>
            <person name="Mashima H."/>
            <person name="Onda H."/>
            <person name="Hisano S."/>
            <person name="Kasuya H."/>
            <person name="Hori T."/>
            <person name="Yamada S."/>
            <person name="Tomura H."/>
            <person name="Yamada Y."/>
            <person name="Inoue I."/>
            <person name="Kojima I."/>
            <person name="Takeda J."/>
        </authorList>
    </citation>
    <scope>NUCLEOTIDE SEQUENCE [MRNA]</scope>
    <scope>FUNCTION</scope>
    <scope>TISSUE SPECIFICITY</scope>
    <scope>DEVELOPMENTAL STAGE</scope>
    <source>
        <tissue>Thalamus</tissue>
    </source>
</reference>
<reference key="2">
    <citation type="journal article" date="2006" name="Nature">
        <title>Human chromosome 11 DNA sequence and analysis including novel gene identification.</title>
        <authorList>
            <person name="Taylor T.D."/>
            <person name="Noguchi H."/>
            <person name="Totoki Y."/>
            <person name="Toyoda A."/>
            <person name="Kuroki Y."/>
            <person name="Dewar K."/>
            <person name="Lloyd C."/>
            <person name="Itoh T."/>
            <person name="Takeda T."/>
            <person name="Kim D.-W."/>
            <person name="She X."/>
            <person name="Barlow K.F."/>
            <person name="Bloom T."/>
            <person name="Bruford E."/>
            <person name="Chang J.L."/>
            <person name="Cuomo C.A."/>
            <person name="Eichler E."/>
            <person name="FitzGerald M.G."/>
            <person name="Jaffe D.B."/>
            <person name="LaButti K."/>
            <person name="Nicol R."/>
            <person name="Park H.-S."/>
            <person name="Seaman C."/>
            <person name="Sougnez C."/>
            <person name="Yang X."/>
            <person name="Zimmer A.R."/>
            <person name="Zody M.C."/>
            <person name="Birren B.W."/>
            <person name="Nusbaum C."/>
            <person name="Fujiyama A."/>
            <person name="Hattori M."/>
            <person name="Rogers J."/>
            <person name="Lander E.S."/>
            <person name="Sakaki Y."/>
        </authorList>
    </citation>
    <scope>NUCLEOTIDE SEQUENCE [LARGE SCALE GENOMIC DNA]</scope>
</reference>
<reference key="3">
    <citation type="submission" date="2005-09" db="EMBL/GenBank/DDBJ databases">
        <authorList>
            <person name="Mural R.J."/>
            <person name="Istrail S."/>
            <person name="Sutton G.G."/>
            <person name="Florea L."/>
            <person name="Halpern A.L."/>
            <person name="Mobarry C.M."/>
            <person name="Lippert R."/>
            <person name="Walenz B."/>
            <person name="Shatkay H."/>
            <person name="Dew I."/>
            <person name="Miller J.R."/>
            <person name="Flanigan M.J."/>
            <person name="Edwards N.J."/>
            <person name="Bolanos R."/>
            <person name="Fasulo D."/>
            <person name="Halldorsson B.V."/>
            <person name="Hannenhalli S."/>
            <person name="Turner R."/>
            <person name="Yooseph S."/>
            <person name="Lu F."/>
            <person name="Nusskern D.R."/>
            <person name="Shue B.C."/>
            <person name="Zheng X.H."/>
            <person name="Zhong F."/>
            <person name="Delcher A.L."/>
            <person name="Huson D.H."/>
            <person name="Kravitz S.A."/>
            <person name="Mouchard L."/>
            <person name="Reinert K."/>
            <person name="Remington K.A."/>
            <person name="Clark A.G."/>
            <person name="Waterman M.S."/>
            <person name="Eichler E.E."/>
            <person name="Adams M.D."/>
            <person name="Hunkapiller M.W."/>
            <person name="Myers E.W."/>
            <person name="Venter J.C."/>
        </authorList>
    </citation>
    <scope>NUCLEOTIDE SEQUENCE [LARGE SCALE GENOMIC DNA]</scope>
</reference>
<reference key="4">
    <citation type="journal article" date="2004" name="Genome Res.">
        <title>The status, quality, and expansion of the NIH full-length cDNA project: the Mammalian Gene Collection (MGC).</title>
        <authorList>
            <consortium name="The MGC Project Team"/>
        </authorList>
    </citation>
    <scope>NUCLEOTIDE SEQUENCE [LARGE SCALE MRNA]</scope>
</reference>
<reference key="5">
    <citation type="journal article" date="2001" name="J. Neurosci.">
        <title>Identification of differentiation-associated brain-specific phosphate transporter as a second vesicular glutamate transporter (VGLUT2).</title>
        <authorList>
            <person name="Takamori S."/>
            <person name="Rhee J.S."/>
            <person name="Rosenmund C."/>
            <person name="Jahn R."/>
        </authorList>
    </citation>
    <scope>FUNCTION</scope>
    <scope>TRANSPORTER ACTIVITY</scope>
    <scope>SUBCELLULAR LOCATION</scope>
</reference>
<reference key="6">
    <citation type="journal article" date="2021" name="Cell Rep.">
        <title>Vesicular Glutamate Transporters (SLCA17 A6, 7, 8) Control Synaptic Phosphate Levels.</title>
        <authorList>
            <person name="Cheret C."/>
            <person name="Ganzella M."/>
            <person name="Preobraschenski J."/>
            <person name="Jahn R."/>
            <person name="Ahnert-Hilger G."/>
        </authorList>
    </citation>
    <scope>FUNCTION</scope>
    <scope>TRANSPORTER ACTIVITY</scope>
    <scope>SUBCELLULAR LOCATION</scope>
</reference>
<reference key="7">
    <citation type="journal article" date="2006" name="Science">
        <title>The consensus coding sequences of human breast and colorectal cancers.</title>
        <authorList>
            <person name="Sjoeblom T."/>
            <person name="Jones S."/>
            <person name="Wood L.D."/>
            <person name="Parsons D.W."/>
            <person name="Lin J."/>
            <person name="Barber T.D."/>
            <person name="Mandelker D."/>
            <person name="Leary R.J."/>
            <person name="Ptak J."/>
            <person name="Silliman N."/>
            <person name="Szabo S."/>
            <person name="Buckhaults P."/>
            <person name="Farrell C."/>
            <person name="Meeh P."/>
            <person name="Markowitz S.D."/>
            <person name="Willis J."/>
            <person name="Dawson D."/>
            <person name="Willson J.K.V."/>
            <person name="Gazdar A.F."/>
            <person name="Hartigan J."/>
            <person name="Wu L."/>
            <person name="Liu C."/>
            <person name="Parmigiani G."/>
            <person name="Park B.H."/>
            <person name="Bachman K.E."/>
            <person name="Papadopoulos N."/>
            <person name="Vogelstein B."/>
            <person name="Kinzler K.W."/>
            <person name="Velculescu V.E."/>
        </authorList>
    </citation>
    <scope>VARIANT [LARGE SCALE ANALYSIS] SER-40</scope>
</reference>
<sequence>MESVKQRILAPGKEGLKNFAGKSLGQIYRVLEKKQDTGETIELTEDGKPLEVPERKAPLCDCTCFGLPRRYIIAIMSGLGFCISFGIRCNLGVAIVDMVNNSTIHRGGKVIKEKAKFNWDPETVGMIHGSFFWGYIITQIPGGYIASRLAANRVFGAAILLTSTLNMLIPSAARVHYGCVIFVRILQGLVEGVTYPACHGIWSKWAPPLERSRLATTSFCGSYAGAVIAMPLAGILVQYTGWSSVFYVYGSFGMVWYMFWLLVSYESPAKHPTITDEERRYIEESIGESANLLGAMEKFKTPWRKFFTSMPVYAIIVANFCRSWTFYLLLISQPAYFEEVFGFEISKVGMLSAVPHLVMTIIVPIGGQIADFLRSKQILSTTTVRKIMNCGGFGMEATLLLVVGYSHTRGVAISFLVLAVGFSGFAISGFNVNHLDIAPRYASILMGISNGVGTLSGMVCPIIVGAMTKNKSREEWQYVFLIAALVHYGGVIFYAIFASGEKQPWADPEETSEEKCGFIHEDELDEETGDITQNYINYGTTKSYGATTQANGGWPSGWEKKEEFVQGEVQDSHSYKDRVDYS</sequence>
<accession>Q9P2U8</accession>
<accession>A6NKS2</accession>
<protein>
    <recommendedName>
        <fullName evidence="8">Vesicular glutamate transporter 2</fullName>
        <shortName evidence="8">VGluT2</shortName>
    </recommendedName>
    <alternativeName>
        <fullName evidence="8">Differentiation-associated BNPI</fullName>
    </alternativeName>
    <alternativeName>
        <fullName evidence="7">Differentiation-associated Na(+)-dependent inorganic phosphate cotransporter</fullName>
    </alternativeName>
    <alternativeName>
        <fullName>Solute carrier family 17 member 6</fullName>
    </alternativeName>
</protein>
<comment type="function">
    <text evidence="1 2 4 5 10">Multifunctional transporter that transports L-glutamate as well as multiple ions such as chloride, proton, potassium, sodium and phosphate (PubMed:11698620, PubMed:33440152). At the synaptic vesicle membrane, mainly functions as a uniporter which transports preferentially L-glutamate but also, phosphate from the cytoplasm into synaptic vesicles at presynaptic nerve terminals of excitatory neural cells (PubMed:11698620). The L-glutamate or phosphate uniporter activity is electrogenic and is driven by the proton electrochemical gradient, mainly by the electrical gradient established by the vacuolar H(+)-ATPase across the synaptic vesicle membrane (PubMed:11698620). In addition, functions as a chloride channel that allows the chloride permeation through the synaptic vesicle membrane therefore affects the proton electrochemical gradient and promotes synaptic vesicles acidification (By similarity). Moreover, functions as a vesicular K(+)/H(+) antiport allowing to maintain the electrical gradient and to decrease chemical gradient and therefore sustain vesicular glutamate uptake (By similarity). The vesicular H(+)/H(+) antiport activity is electroneutral (By similarity). At the plasma membrane, following exocytosis, functions as a symporter of Na(+) and phosphate from the extracellular space to the cytoplasm allowing synaptic phosphate homeostasis regulation (Probable) (PubMed:10820226). The symporter activity is driven by an inside negative membrane potential and is electrogenic (Probable). Also involved in the regulation of retinal hyaloid vessel regression during postnatal development (By similarity). May also play a role in the endocrine glutamatergic system of other tissues such as pineal gland and pancreas (By similarity).</text>
</comment>
<comment type="catalytic activity">
    <reaction evidence="5">
        <text>L-glutamate(out) = L-glutamate(in)</text>
        <dbReference type="Rhea" id="RHEA:66336"/>
        <dbReference type="ChEBI" id="CHEBI:29985"/>
    </reaction>
</comment>
<comment type="catalytic activity">
    <reaction evidence="10">
        <text>3 Na(+)(out) + phosphate(out) = 3 Na(+)(in) + phosphate(in)</text>
        <dbReference type="Rhea" id="RHEA:71255"/>
        <dbReference type="ChEBI" id="CHEBI:29101"/>
        <dbReference type="ChEBI" id="CHEBI:43474"/>
    </reaction>
</comment>
<comment type="catalytic activity">
    <reaction evidence="2">
        <text>phosphate(in) = phosphate(out)</text>
        <dbReference type="Rhea" id="RHEA:32823"/>
        <dbReference type="ChEBI" id="CHEBI:43474"/>
    </reaction>
</comment>
<comment type="catalytic activity">
    <reaction evidence="2">
        <text>K(+)(in) + H(+)(out) = K(+)(out) + H(+)(in)</text>
        <dbReference type="Rhea" id="RHEA:29467"/>
        <dbReference type="ChEBI" id="CHEBI:15378"/>
        <dbReference type="ChEBI" id="CHEBI:29103"/>
    </reaction>
</comment>
<comment type="catalytic activity">
    <reaction evidence="2">
        <text>chloride(in) = chloride(out)</text>
        <dbReference type="Rhea" id="RHEA:29823"/>
        <dbReference type="ChEBI" id="CHEBI:17996"/>
    </reaction>
</comment>
<comment type="activity regulation">
    <text evidence="2">Chloride channel activity is allosterically activated by lumenal H(+) and Cl(-) leading to synaptic vesicles acidification. The L-glutamate transport activity is allosterically activated by lumenal H(+) and Cl(-). The allosteric requirement for H(+) efficiently prevents non-vesicular efflux across the plasma membrane. The L-glutamate uniporter activity exhibits a biphasic dependence on chloride concentration.</text>
</comment>
<comment type="subcellular location">
    <subcellularLocation>
        <location evidence="5">Cytoplasmic vesicle</location>
        <location evidence="5">Secretory vesicle</location>
        <location evidence="5">Synaptic vesicle membrane</location>
        <topology evidence="3">Multi-pass membrane protein</topology>
    </subcellularLocation>
    <subcellularLocation>
        <location evidence="1">Synapse</location>
        <location evidence="1">Synaptosome</location>
    </subcellularLocation>
    <subcellularLocation>
        <location evidence="10">Cell membrane</location>
        <topology evidence="3">Multi-pass membrane protein</topology>
    </subcellularLocation>
</comment>
<comment type="tissue specificity">
    <text evidence="4">Predominantly expressed in adult brain (PubMed:10820226). Expressed in amygdala, caudate nucleus, cerebral cortex, frontal lobe, hippocampus, medulla, occipital lobe, putamen, spinal cord, substantia nigra, subthalamic nucleus, temporal lobe and thalamus (PubMed:10820226).</text>
</comment>
<comment type="developmental stage">
    <text evidence="4">Expressed in fetal brain.</text>
</comment>
<comment type="similarity">
    <text evidence="9">Belongs to the major facilitator superfamily. Sodium/anion cotransporter family. VGLUT subfamily.</text>
</comment>
<evidence type="ECO:0000250" key="1">
    <source>
        <dbReference type="UniProtKB" id="Q8BLE7"/>
    </source>
</evidence>
<evidence type="ECO:0000250" key="2">
    <source>
        <dbReference type="UniProtKB" id="Q9JI12"/>
    </source>
</evidence>
<evidence type="ECO:0000255" key="3"/>
<evidence type="ECO:0000269" key="4">
    <source>
    </source>
</evidence>
<evidence type="ECO:0000269" key="5">
    <source>
    </source>
</evidence>
<evidence type="ECO:0000269" key="6">
    <source>
    </source>
</evidence>
<evidence type="ECO:0000303" key="7">
    <source>
    </source>
</evidence>
<evidence type="ECO:0000303" key="8">
    <source>
    </source>
</evidence>
<evidence type="ECO:0000305" key="9"/>
<evidence type="ECO:0000305" key="10">
    <source>
    </source>
</evidence>
<evidence type="ECO:0000312" key="11">
    <source>
        <dbReference type="HGNC" id="HGNC:16703"/>
    </source>
</evidence>
<gene>
    <name evidence="11" type="primary">SLC17A6</name>
    <name evidence="7" type="synonym">DNPI</name>
    <name evidence="8" type="synonym">VGLUT2</name>
</gene>
<dbReference type="EMBL" id="AB032435">
    <property type="protein sequence ID" value="BAA92874.1"/>
    <property type="molecule type" value="mRNA"/>
</dbReference>
<dbReference type="EMBL" id="AC040936">
    <property type="status" value="NOT_ANNOTATED_CDS"/>
    <property type="molecule type" value="Genomic_DNA"/>
</dbReference>
<dbReference type="EMBL" id="CH471064">
    <property type="protein sequence ID" value="EAW68324.1"/>
    <property type="molecule type" value="Genomic_DNA"/>
</dbReference>
<dbReference type="EMBL" id="BC069629">
    <property type="protein sequence ID" value="AAH69629.1"/>
    <property type="molecule type" value="mRNA"/>
</dbReference>
<dbReference type="EMBL" id="BC069640">
    <property type="protein sequence ID" value="AAH69640.1"/>
    <property type="molecule type" value="mRNA"/>
</dbReference>
<dbReference type="EMBL" id="BC069646">
    <property type="protein sequence ID" value="AAH69646.1"/>
    <property type="molecule type" value="mRNA"/>
</dbReference>
<dbReference type="CCDS" id="CCDS7856.1"/>
<dbReference type="RefSeq" id="NP_065079.1">
    <property type="nucleotide sequence ID" value="NM_020346.3"/>
</dbReference>
<dbReference type="SMR" id="Q9P2U8"/>
<dbReference type="BioGRID" id="121355">
    <property type="interactions" value="2"/>
</dbReference>
<dbReference type="FunCoup" id="Q9P2U8">
    <property type="interactions" value="452"/>
</dbReference>
<dbReference type="IntAct" id="Q9P2U8">
    <property type="interactions" value="2"/>
</dbReference>
<dbReference type="STRING" id="9606.ENSP00000263160"/>
<dbReference type="TCDB" id="2.A.1.14.31">
    <property type="family name" value="the major facilitator superfamily (mfs)"/>
</dbReference>
<dbReference type="GlyCosmos" id="Q9P2U8">
    <property type="glycosylation" value="3 sites, No reported glycans"/>
</dbReference>
<dbReference type="GlyGen" id="Q9P2U8">
    <property type="glycosylation" value="3 sites"/>
</dbReference>
<dbReference type="iPTMnet" id="Q9P2U8"/>
<dbReference type="PhosphoSitePlus" id="Q9P2U8"/>
<dbReference type="SwissPalm" id="Q9P2U8"/>
<dbReference type="BioMuta" id="SLC17A6"/>
<dbReference type="DMDM" id="74734915"/>
<dbReference type="MassIVE" id="Q9P2U8"/>
<dbReference type="PaxDb" id="9606-ENSP00000263160"/>
<dbReference type="PeptideAtlas" id="Q9P2U8"/>
<dbReference type="ProteomicsDB" id="83899"/>
<dbReference type="Antibodypedia" id="25332">
    <property type="antibodies" value="249 antibodies from 31 providers"/>
</dbReference>
<dbReference type="DNASU" id="57084"/>
<dbReference type="Ensembl" id="ENST00000263160.4">
    <property type="protein sequence ID" value="ENSP00000263160.3"/>
    <property type="gene ID" value="ENSG00000091664.9"/>
</dbReference>
<dbReference type="GeneID" id="57084"/>
<dbReference type="KEGG" id="hsa:57084"/>
<dbReference type="MANE-Select" id="ENST00000263160.4">
    <property type="protein sequence ID" value="ENSP00000263160.3"/>
    <property type="RefSeq nucleotide sequence ID" value="NM_020346.3"/>
    <property type="RefSeq protein sequence ID" value="NP_065079.1"/>
</dbReference>
<dbReference type="UCSC" id="uc001mqk.4">
    <property type="organism name" value="human"/>
</dbReference>
<dbReference type="AGR" id="HGNC:16703"/>
<dbReference type="CTD" id="57084"/>
<dbReference type="DisGeNET" id="57084"/>
<dbReference type="GeneCards" id="SLC17A6"/>
<dbReference type="HGNC" id="HGNC:16703">
    <property type="gene designation" value="SLC17A6"/>
</dbReference>
<dbReference type="HPA" id="ENSG00000091664">
    <property type="expression patterns" value="Tissue enhanced (brain, pituitary gland, retina)"/>
</dbReference>
<dbReference type="MIM" id="607563">
    <property type="type" value="gene"/>
</dbReference>
<dbReference type="neXtProt" id="NX_Q9P2U8"/>
<dbReference type="OpenTargets" id="ENSG00000091664"/>
<dbReference type="PharmGKB" id="PA424"/>
<dbReference type="VEuPathDB" id="HostDB:ENSG00000091664"/>
<dbReference type="eggNOG" id="KOG2532">
    <property type="taxonomic scope" value="Eukaryota"/>
</dbReference>
<dbReference type="GeneTree" id="ENSGT00940000155891"/>
<dbReference type="HOGENOM" id="CLU_001265_5_0_1"/>
<dbReference type="InParanoid" id="Q9P2U8"/>
<dbReference type="OMA" id="YNEQSQM"/>
<dbReference type="OrthoDB" id="2985014at2759"/>
<dbReference type="PAN-GO" id="Q9P2U8">
    <property type="GO annotations" value="8 GO annotations based on evolutionary models"/>
</dbReference>
<dbReference type="PhylomeDB" id="Q9P2U8"/>
<dbReference type="TreeFam" id="TF313535"/>
<dbReference type="PathwayCommons" id="Q9P2U8"/>
<dbReference type="Reactome" id="R-HSA-428643">
    <property type="pathway name" value="Organic anion transporters"/>
</dbReference>
<dbReference type="BioGRID-ORCS" id="57084">
    <property type="hits" value="7 hits in 1146 CRISPR screens"/>
</dbReference>
<dbReference type="ChiTaRS" id="SLC17A6">
    <property type="organism name" value="human"/>
</dbReference>
<dbReference type="GenomeRNAi" id="57084"/>
<dbReference type="Pharos" id="Q9P2U8">
    <property type="development level" value="Tbio"/>
</dbReference>
<dbReference type="PRO" id="PR:Q9P2U8"/>
<dbReference type="Proteomes" id="UP000005640">
    <property type="component" value="Chromosome 11"/>
</dbReference>
<dbReference type="RNAct" id="Q9P2U8">
    <property type="molecule type" value="protein"/>
</dbReference>
<dbReference type="Bgee" id="ENSG00000091664">
    <property type="expression patterns" value="Expressed in lateral nuclear group of thalamus and 52 other cell types or tissues"/>
</dbReference>
<dbReference type="GO" id="GO:0034707">
    <property type="term" value="C:chloride channel complex"/>
    <property type="evidence" value="ECO:0007669"/>
    <property type="project" value="UniProtKB-KW"/>
</dbReference>
<dbReference type="GO" id="GO:0060076">
    <property type="term" value="C:excitatory synapse"/>
    <property type="evidence" value="ECO:0000318"/>
    <property type="project" value="GO_Central"/>
</dbReference>
<dbReference type="GO" id="GO:0043005">
    <property type="term" value="C:neuron projection"/>
    <property type="evidence" value="ECO:0000250"/>
    <property type="project" value="UniProtKB"/>
</dbReference>
<dbReference type="GO" id="GO:0005886">
    <property type="term" value="C:plasma membrane"/>
    <property type="evidence" value="ECO:0007669"/>
    <property type="project" value="UniProtKB-SubCell"/>
</dbReference>
<dbReference type="GO" id="GO:0030672">
    <property type="term" value="C:synaptic vesicle membrane"/>
    <property type="evidence" value="ECO:0000314"/>
    <property type="project" value="UniProtKB"/>
</dbReference>
<dbReference type="GO" id="GO:0005254">
    <property type="term" value="F:chloride channel activity"/>
    <property type="evidence" value="ECO:0000250"/>
    <property type="project" value="UniProtKB"/>
</dbReference>
<dbReference type="GO" id="GO:0005313">
    <property type="term" value="F:L-glutamate transmembrane transporter activity"/>
    <property type="evidence" value="ECO:0000318"/>
    <property type="project" value="GO_Central"/>
</dbReference>
<dbReference type="GO" id="GO:0140788">
    <property type="term" value="F:L-glutamate uniporter activity"/>
    <property type="evidence" value="ECO:0000314"/>
    <property type="project" value="UniProtKB"/>
</dbReference>
<dbReference type="GO" id="GO:0005326">
    <property type="term" value="F:neurotransmitter transmembrane transporter activity"/>
    <property type="evidence" value="ECO:0000318"/>
    <property type="project" value="GO_Central"/>
</dbReference>
<dbReference type="GO" id="GO:0015386">
    <property type="term" value="F:potassium:proton antiporter activity"/>
    <property type="evidence" value="ECO:0000250"/>
    <property type="project" value="UniProtKB"/>
</dbReference>
<dbReference type="GO" id="GO:0005436">
    <property type="term" value="F:sodium:phosphate symporter activity"/>
    <property type="evidence" value="ECO:0000250"/>
    <property type="project" value="UniProtKB"/>
</dbReference>
<dbReference type="GO" id="GO:1990384">
    <property type="term" value="P:hyaloid vascular plexus regression"/>
    <property type="evidence" value="ECO:0000250"/>
    <property type="project" value="UniProtKB"/>
</dbReference>
<dbReference type="GO" id="GO:0051938">
    <property type="term" value="P:L-glutamate import"/>
    <property type="evidence" value="ECO:0000315"/>
    <property type="project" value="UniProtKB"/>
</dbReference>
<dbReference type="GO" id="GO:0006811">
    <property type="term" value="P:monoatomic ion transport"/>
    <property type="evidence" value="ECO:0000304"/>
    <property type="project" value="Reactome"/>
</dbReference>
<dbReference type="GO" id="GO:0098700">
    <property type="term" value="P:neurotransmitter loading into synaptic vesicle"/>
    <property type="evidence" value="ECO:0000318"/>
    <property type="project" value="GO_Central"/>
</dbReference>
<dbReference type="GO" id="GO:0055062">
    <property type="term" value="P:phosphate ion homeostasis"/>
    <property type="evidence" value="ECO:0000314"/>
    <property type="project" value="UniProtKB"/>
</dbReference>
<dbReference type="GO" id="GO:0006817">
    <property type="term" value="P:phosphate ion transport"/>
    <property type="evidence" value="ECO:0000250"/>
    <property type="project" value="UniProtKB"/>
</dbReference>
<dbReference type="GO" id="GO:0050803">
    <property type="term" value="P:regulation of synapse structure or activity"/>
    <property type="evidence" value="ECO:0000318"/>
    <property type="project" value="GO_Central"/>
</dbReference>
<dbReference type="GO" id="GO:0044341">
    <property type="term" value="P:sodium-dependent phosphate transport"/>
    <property type="evidence" value="ECO:0000250"/>
    <property type="project" value="UniProtKB"/>
</dbReference>
<dbReference type="GO" id="GO:0035249">
    <property type="term" value="P:synaptic transmission, glutamatergic"/>
    <property type="evidence" value="ECO:0000318"/>
    <property type="project" value="GO_Central"/>
</dbReference>
<dbReference type="CDD" id="cd17382">
    <property type="entry name" value="MFS_SLC17A6_7_8_VGluT"/>
    <property type="match status" value="1"/>
</dbReference>
<dbReference type="FunFam" id="1.20.1250.20:FF:000004">
    <property type="entry name" value="vesicular glutamate transporter 2 isoform X1"/>
    <property type="match status" value="1"/>
</dbReference>
<dbReference type="FunFam" id="1.20.1250.20:FF:000005">
    <property type="entry name" value="vesicular glutamate transporter 2 isoform X1"/>
    <property type="match status" value="1"/>
</dbReference>
<dbReference type="Gene3D" id="1.20.1250.20">
    <property type="entry name" value="MFS general substrate transporter like domains"/>
    <property type="match status" value="2"/>
</dbReference>
<dbReference type="InterPro" id="IPR011701">
    <property type="entry name" value="MFS"/>
</dbReference>
<dbReference type="InterPro" id="IPR020846">
    <property type="entry name" value="MFS_dom"/>
</dbReference>
<dbReference type="InterPro" id="IPR050382">
    <property type="entry name" value="MFS_Na/Anion_cotransporter"/>
</dbReference>
<dbReference type="InterPro" id="IPR036259">
    <property type="entry name" value="MFS_trans_sf"/>
</dbReference>
<dbReference type="PANTHER" id="PTHR11662">
    <property type="entry name" value="SOLUTE CARRIER FAMILY 17"/>
    <property type="match status" value="1"/>
</dbReference>
<dbReference type="PANTHER" id="PTHR11662:SF201">
    <property type="entry name" value="VESICULAR GLUTAMATE TRANSPORTER 2"/>
    <property type="match status" value="1"/>
</dbReference>
<dbReference type="Pfam" id="PF07690">
    <property type="entry name" value="MFS_1"/>
    <property type="match status" value="1"/>
</dbReference>
<dbReference type="SUPFAM" id="SSF103473">
    <property type="entry name" value="MFS general substrate transporter"/>
    <property type="match status" value="1"/>
</dbReference>
<dbReference type="PROSITE" id="PS50850">
    <property type="entry name" value="MFS"/>
    <property type="match status" value="1"/>
</dbReference>
<proteinExistence type="evidence at protein level"/>